<gene>
    <name type="primary">TUB4</name>
    <name type="ORF">COCHEDRAFT_1179534</name>
</gene>
<evidence type="ECO:0000250" key="1"/>
<evidence type="ECO:0000255" key="2"/>
<evidence type="ECO:0000256" key="3">
    <source>
        <dbReference type="SAM" id="MobiDB-lite"/>
    </source>
</evidence>
<evidence type="ECO:0000305" key="4"/>
<feature type="chain" id="PRO_0000048452" description="Tubulin gamma chain">
    <location>
        <begin position="1"/>
        <end position="459"/>
    </location>
</feature>
<feature type="region of interest" description="Disordered" evidence="3">
    <location>
        <begin position="440"/>
        <end position="459"/>
    </location>
</feature>
<feature type="binding site" evidence="2">
    <location>
        <begin position="142"/>
        <end position="148"/>
    </location>
    <ligand>
        <name>GTP</name>
        <dbReference type="ChEBI" id="CHEBI:37565"/>
    </ligand>
</feature>
<feature type="sequence conflict" description="In Ref. 3; CAA52464." evidence="4" ref="3">
    <original>L</original>
    <variation>A</variation>
    <location>
        <position position="67"/>
    </location>
</feature>
<feature type="sequence conflict" description="In Ref. 3; CAA52464." evidence="4" ref="3">
    <original>L</original>
    <variation>W</variation>
    <location>
        <position position="119"/>
    </location>
</feature>
<feature type="sequence conflict" description="In Ref. 3; CAA52464." evidence="4" ref="3">
    <original>N</original>
    <variation>T</variation>
    <location>
        <position position="221"/>
    </location>
</feature>
<feature type="sequence conflict" description="In Ref. 3; CAA52464." evidence="4" ref="3">
    <original>GYM</original>
    <variation>AYS</variation>
    <location>
        <begin position="246"/>
        <end position="248"/>
    </location>
</feature>
<feature type="sequence conflict" description="In Ref. 3; CAA52464." evidence="4" ref="3">
    <location>
        <position position="274"/>
    </location>
</feature>
<feature type="sequence conflict" description="In Ref. 3; CAA52464." evidence="4" ref="3">
    <original>K</original>
    <variation>SH</variation>
    <location>
        <position position="312"/>
    </location>
</feature>
<feature type="sequence conflict" description="In Ref. 3; CAA52464." evidence="4" ref="3">
    <original>GEADPS</original>
    <variation>AKPTPQ</variation>
    <location>
        <begin position="325"/>
        <end position="330"/>
    </location>
</feature>
<dbReference type="EMBL" id="KB445578">
    <property type="protein sequence ID" value="EMD90570.1"/>
    <property type="molecule type" value="Genomic_DNA"/>
</dbReference>
<dbReference type="EMBL" id="X74455">
    <property type="protein sequence ID" value="CAA52464.1"/>
    <property type="molecule type" value="Genomic_DNA"/>
</dbReference>
<dbReference type="PIR" id="S40209">
    <property type="entry name" value="S40209"/>
</dbReference>
<dbReference type="SMR" id="P40633"/>
<dbReference type="STRING" id="701091.P40633"/>
<dbReference type="eggNOG" id="KOG1374">
    <property type="taxonomic scope" value="Eukaryota"/>
</dbReference>
<dbReference type="HOGENOM" id="CLU_015718_1_0_1"/>
<dbReference type="OMA" id="HRYISIL"/>
<dbReference type="OrthoDB" id="12867at28556"/>
<dbReference type="Proteomes" id="UP000016936">
    <property type="component" value="Unassembled WGS sequence"/>
</dbReference>
<dbReference type="GO" id="GO:0005737">
    <property type="term" value="C:cytoplasm"/>
    <property type="evidence" value="ECO:0007669"/>
    <property type="project" value="UniProtKB-KW"/>
</dbReference>
<dbReference type="GO" id="GO:0000923">
    <property type="term" value="C:equatorial microtubule organizing center"/>
    <property type="evidence" value="ECO:0007669"/>
    <property type="project" value="EnsemblFungi"/>
</dbReference>
<dbReference type="GO" id="GO:0000931">
    <property type="term" value="C:gamma-tubulin ring complex"/>
    <property type="evidence" value="ECO:0007669"/>
    <property type="project" value="EnsemblFungi"/>
</dbReference>
<dbReference type="GO" id="GO:0008275">
    <property type="term" value="C:gamma-tubulin small complex"/>
    <property type="evidence" value="ECO:0007669"/>
    <property type="project" value="EnsemblFungi"/>
</dbReference>
<dbReference type="GO" id="GO:0061496">
    <property type="term" value="C:half bridge of mitotic spindle pole body"/>
    <property type="evidence" value="ECO:0007669"/>
    <property type="project" value="EnsemblFungi"/>
</dbReference>
<dbReference type="GO" id="GO:0061497">
    <property type="term" value="C:inner plaque of mitotic spindle pole body"/>
    <property type="evidence" value="ECO:0007669"/>
    <property type="project" value="EnsemblFungi"/>
</dbReference>
<dbReference type="GO" id="GO:0031021">
    <property type="term" value="C:interphase microtubule organizing center"/>
    <property type="evidence" value="ECO:0007669"/>
    <property type="project" value="EnsemblFungi"/>
</dbReference>
<dbReference type="GO" id="GO:0043332">
    <property type="term" value="C:mating projection tip"/>
    <property type="evidence" value="ECO:0007669"/>
    <property type="project" value="EnsemblFungi"/>
</dbReference>
<dbReference type="GO" id="GO:0005874">
    <property type="term" value="C:microtubule"/>
    <property type="evidence" value="ECO:0007669"/>
    <property type="project" value="UniProtKB-KW"/>
</dbReference>
<dbReference type="GO" id="GO:0005634">
    <property type="term" value="C:nucleus"/>
    <property type="evidence" value="ECO:0007669"/>
    <property type="project" value="EnsemblFungi"/>
</dbReference>
<dbReference type="GO" id="GO:0071957">
    <property type="term" value="C:old mitotic spindle pole body"/>
    <property type="evidence" value="ECO:0007669"/>
    <property type="project" value="EnsemblFungi"/>
</dbReference>
<dbReference type="GO" id="GO:0061499">
    <property type="term" value="C:outer plaque of mitotic spindle pole body"/>
    <property type="evidence" value="ECO:0007669"/>
    <property type="project" value="EnsemblFungi"/>
</dbReference>
<dbReference type="GO" id="GO:0005525">
    <property type="term" value="F:GTP binding"/>
    <property type="evidence" value="ECO:0007669"/>
    <property type="project" value="UniProtKB-KW"/>
</dbReference>
<dbReference type="GO" id="GO:0031122">
    <property type="term" value="P:cytoplasmic microtubule organization"/>
    <property type="evidence" value="ECO:0007669"/>
    <property type="project" value="InterPro"/>
</dbReference>
<dbReference type="GO" id="GO:0007020">
    <property type="term" value="P:microtubule nucleation"/>
    <property type="evidence" value="ECO:0007669"/>
    <property type="project" value="EnsemblFungi"/>
</dbReference>
<dbReference type="GO" id="GO:1902408">
    <property type="term" value="P:mitotic cytokinesis, division site positioning"/>
    <property type="evidence" value="ECO:0007669"/>
    <property type="project" value="EnsemblFungi"/>
</dbReference>
<dbReference type="GO" id="GO:0051256">
    <property type="term" value="P:mitotic spindle midzone assembly"/>
    <property type="evidence" value="ECO:0007669"/>
    <property type="project" value="EnsemblFungi"/>
</dbReference>
<dbReference type="CDD" id="cd02188">
    <property type="entry name" value="gamma_tubulin"/>
    <property type="match status" value="1"/>
</dbReference>
<dbReference type="FunFam" id="1.10.287.600:FF:000004">
    <property type="entry name" value="Tubulin gamma chain"/>
    <property type="match status" value="1"/>
</dbReference>
<dbReference type="FunFam" id="3.30.1330.20:FF:000003">
    <property type="entry name" value="Tubulin gamma chain"/>
    <property type="match status" value="1"/>
</dbReference>
<dbReference type="FunFam" id="3.40.50.1440:FF:000012">
    <property type="entry name" value="Tubulin gamma chain"/>
    <property type="match status" value="1"/>
</dbReference>
<dbReference type="Gene3D" id="1.10.287.600">
    <property type="entry name" value="Helix hairpin bin"/>
    <property type="match status" value="1"/>
</dbReference>
<dbReference type="Gene3D" id="3.30.1330.20">
    <property type="entry name" value="Tubulin/FtsZ, C-terminal domain"/>
    <property type="match status" value="1"/>
</dbReference>
<dbReference type="Gene3D" id="3.40.50.1440">
    <property type="entry name" value="Tubulin/FtsZ, GTPase domain"/>
    <property type="match status" value="1"/>
</dbReference>
<dbReference type="InterPro" id="IPR002454">
    <property type="entry name" value="Gamma_tubulin"/>
</dbReference>
<dbReference type="InterPro" id="IPR008280">
    <property type="entry name" value="Tub_FtsZ_C"/>
</dbReference>
<dbReference type="InterPro" id="IPR000217">
    <property type="entry name" value="Tubulin"/>
</dbReference>
<dbReference type="InterPro" id="IPR037103">
    <property type="entry name" value="Tubulin/FtsZ-like_C"/>
</dbReference>
<dbReference type="InterPro" id="IPR018316">
    <property type="entry name" value="Tubulin/FtsZ_2-layer-sand-dom"/>
</dbReference>
<dbReference type="InterPro" id="IPR036525">
    <property type="entry name" value="Tubulin/FtsZ_GTPase_sf"/>
</dbReference>
<dbReference type="InterPro" id="IPR023123">
    <property type="entry name" value="Tubulin_C"/>
</dbReference>
<dbReference type="InterPro" id="IPR017975">
    <property type="entry name" value="Tubulin_CS"/>
</dbReference>
<dbReference type="InterPro" id="IPR003008">
    <property type="entry name" value="Tubulin_FtsZ_GTPase"/>
</dbReference>
<dbReference type="PANTHER" id="PTHR11588">
    <property type="entry name" value="TUBULIN"/>
    <property type="match status" value="1"/>
</dbReference>
<dbReference type="Pfam" id="PF00091">
    <property type="entry name" value="Tubulin"/>
    <property type="match status" value="1"/>
</dbReference>
<dbReference type="Pfam" id="PF03953">
    <property type="entry name" value="Tubulin_C"/>
    <property type="match status" value="1"/>
</dbReference>
<dbReference type="PRINTS" id="PR01164">
    <property type="entry name" value="GAMMATUBULIN"/>
</dbReference>
<dbReference type="PRINTS" id="PR01161">
    <property type="entry name" value="TUBULIN"/>
</dbReference>
<dbReference type="SMART" id="SM00864">
    <property type="entry name" value="Tubulin"/>
    <property type="match status" value="1"/>
</dbReference>
<dbReference type="SMART" id="SM00865">
    <property type="entry name" value="Tubulin_C"/>
    <property type="match status" value="1"/>
</dbReference>
<dbReference type="SUPFAM" id="SSF55307">
    <property type="entry name" value="Tubulin C-terminal domain-like"/>
    <property type="match status" value="1"/>
</dbReference>
<dbReference type="SUPFAM" id="SSF52490">
    <property type="entry name" value="Tubulin nucleotide-binding domain-like"/>
    <property type="match status" value="1"/>
</dbReference>
<dbReference type="PROSITE" id="PS00227">
    <property type="entry name" value="TUBULIN"/>
    <property type="match status" value="1"/>
</dbReference>
<keyword id="KW-0963">Cytoplasm</keyword>
<keyword id="KW-0206">Cytoskeleton</keyword>
<keyword id="KW-0342">GTP-binding</keyword>
<keyword id="KW-0493">Microtubule</keyword>
<keyword id="KW-0547">Nucleotide-binding</keyword>
<keyword id="KW-1185">Reference proteome</keyword>
<proteinExistence type="inferred from homology"/>
<sequence>MPREIITLQAGQCGNSVGQQFWQQLCQEHGINKDGNLEDFATEGGDRKDVFFYQSDDTRYIPRAILLDLEPRVLHSIQASPYKNIYNPENFYIHKDGTGAGNNWGMGYSMGEQVHEDILDMIDREADGSDSLEGFMMLHSIAGGTGSGLGSYMLERLNDRFPKKLIQTYSVFPNTQDGDIVVQPYNSLLSMRRLTQNADSVVVLDNGALTRIAADRLHVMNPSFEQTNQLVSTVMSASTTTLRYPGYMHNDLVGIVASLIPTPRCHFLMTSYTPFSGENVEQAKTVRKTTVLDVMRRLLQPKNRMVSTNPTKKSCYMSILNIIQGEADPSDVHKSLMRIRERRLATFIPWGPASIQVALTKKSPYVTSSHRVSGLMLANHTGIATLFKRIVAQYSTLRKRNAFLESYKREVPFKDGLGEFDEAKEVVQGLIAEYEEAEDADYLTKETAPTDEAEDKRAG</sequence>
<reference key="1">
    <citation type="journal article" date="2012" name="PLoS Pathog.">
        <title>Diverse lifestyles and strategies of plant pathogenesis encoded in the genomes of eighteen Dothideomycetes fungi.</title>
        <authorList>
            <person name="Ohm R.A."/>
            <person name="Feau N."/>
            <person name="Henrissat B."/>
            <person name="Schoch C.L."/>
            <person name="Horwitz B.A."/>
            <person name="Barry K.W."/>
            <person name="Condon B.J."/>
            <person name="Copeland A.C."/>
            <person name="Dhillon B."/>
            <person name="Glaser F."/>
            <person name="Hesse C.N."/>
            <person name="Kosti I."/>
            <person name="LaButti K."/>
            <person name="Lindquist E.A."/>
            <person name="Lucas S."/>
            <person name="Salamov A.A."/>
            <person name="Bradshaw R.E."/>
            <person name="Ciuffetti L."/>
            <person name="Hamelin R.C."/>
            <person name="Kema G.H.J."/>
            <person name="Lawrence C."/>
            <person name="Scott J.A."/>
            <person name="Spatafora J.W."/>
            <person name="Turgeon B.G."/>
            <person name="de Wit P.J.G.M."/>
            <person name="Zhong S."/>
            <person name="Goodwin S.B."/>
            <person name="Grigoriev I.V."/>
        </authorList>
    </citation>
    <scope>NUCLEOTIDE SEQUENCE [LARGE SCALE GENOMIC DNA]</scope>
    <source>
        <strain>C5 / ATCC 48332 / race O</strain>
    </source>
</reference>
<reference key="2">
    <citation type="journal article" date="2013" name="PLoS Genet.">
        <title>Comparative genome structure, secondary metabolite, and effector coding capacity across Cochliobolus pathogens.</title>
        <authorList>
            <person name="Condon B.J."/>
            <person name="Leng Y."/>
            <person name="Wu D."/>
            <person name="Bushley K.E."/>
            <person name="Ohm R.A."/>
            <person name="Otillar R."/>
            <person name="Martin J."/>
            <person name="Schackwitz W."/>
            <person name="Grimwood J."/>
            <person name="MohdZainudin N."/>
            <person name="Xue C."/>
            <person name="Wang R."/>
            <person name="Manning V.A."/>
            <person name="Dhillon B."/>
            <person name="Tu Z.J."/>
            <person name="Steffenson B.J."/>
            <person name="Salamov A."/>
            <person name="Sun H."/>
            <person name="Lowry S."/>
            <person name="LaButti K."/>
            <person name="Han J."/>
            <person name="Copeland A."/>
            <person name="Lindquist E."/>
            <person name="Barry K."/>
            <person name="Schmutz J."/>
            <person name="Baker S.E."/>
            <person name="Ciuffetti L.M."/>
            <person name="Grigoriev I.V."/>
            <person name="Zhong S."/>
            <person name="Turgeon B.G."/>
        </authorList>
    </citation>
    <scope>NUCLEOTIDE SEQUENCE [LARGE SCALE GENOMIC DNA]</scope>
    <source>
        <strain>C5 / ATCC 48332 / race O</strain>
    </source>
</reference>
<reference key="3">
    <citation type="submission" date="1993-08" db="EMBL/GenBank/DDBJ databases">
        <authorList>
            <person name="Parkinson C."/>
            <person name="Luo H."/>
            <person name="Knight A."/>
            <person name="Ahlquist J."/>
            <person name="Perlin M.H."/>
        </authorList>
    </citation>
    <scope>NUCLEOTIDE SEQUENCE [GENOMIC DNA] OF 66-330</scope>
    <source>
        <strain>C5 / ATCC 48332 / race O</strain>
    </source>
</reference>
<organism>
    <name type="scientific">Cochliobolus heterostrophus (strain C5 / ATCC 48332 / race O)</name>
    <name type="common">Southern corn leaf blight fungus</name>
    <name type="synonym">Bipolaris maydis</name>
    <dbReference type="NCBI Taxonomy" id="701091"/>
    <lineage>
        <taxon>Eukaryota</taxon>
        <taxon>Fungi</taxon>
        <taxon>Dikarya</taxon>
        <taxon>Ascomycota</taxon>
        <taxon>Pezizomycotina</taxon>
        <taxon>Dothideomycetes</taxon>
        <taxon>Pleosporomycetidae</taxon>
        <taxon>Pleosporales</taxon>
        <taxon>Pleosporineae</taxon>
        <taxon>Pleosporaceae</taxon>
        <taxon>Bipolaris</taxon>
    </lineage>
</organism>
<comment type="function">
    <text evidence="1">Tubulin is the major constituent of microtubules. The gamma chain is found at microtubule organizing centers (MTOC) such as the spindle poles or the centrosome, suggesting that it is involved in the minus-end nucleation of microtubule assembly (By similarity).</text>
</comment>
<comment type="subcellular location">
    <subcellularLocation>
        <location evidence="4">Cytoplasm</location>
        <location evidence="4">Cytoskeleton</location>
        <location evidence="4">Microtubule organizing center</location>
        <location evidence="4">Spindle pole body</location>
    </subcellularLocation>
</comment>
<comment type="similarity">
    <text evidence="4">Belongs to the tubulin family.</text>
</comment>
<accession>P40633</accession>
<accession>M2SYV7</accession>
<name>TBG_COCH5</name>
<protein>
    <recommendedName>
        <fullName>Tubulin gamma chain</fullName>
    </recommendedName>
    <alternativeName>
        <fullName>Gamma-tubulin</fullName>
    </alternativeName>
</protein>